<proteinExistence type="inferred from homology"/>
<dbReference type="EMBL" id="AE005674">
    <property type="protein sequence ID" value="AAN42006.2"/>
    <property type="molecule type" value="Genomic_DNA"/>
</dbReference>
<dbReference type="EMBL" id="AE014073">
    <property type="protein sequence ID" value="AAP15883.1"/>
    <property type="molecule type" value="Genomic_DNA"/>
</dbReference>
<dbReference type="RefSeq" id="NP_706299.2">
    <property type="nucleotide sequence ID" value="NC_004337.2"/>
</dbReference>
<dbReference type="RefSeq" id="WP_001295328.1">
    <property type="nucleotide sequence ID" value="NZ_WPGW01000023.1"/>
</dbReference>
<dbReference type="SMR" id="P0A929"/>
<dbReference type="STRING" id="198214.SF0348"/>
<dbReference type="PaxDb" id="198214-SF0348"/>
<dbReference type="GeneID" id="1027664"/>
<dbReference type="GeneID" id="75202833"/>
<dbReference type="KEGG" id="sfl:SF0348"/>
<dbReference type="KEGG" id="sfx:S0356"/>
<dbReference type="PATRIC" id="fig|198214.7.peg.399"/>
<dbReference type="HOGENOM" id="CLU_073836_0_0_6"/>
<dbReference type="Proteomes" id="UP000001006">
    <property type="component" value="Chromosome"/>
</dbReference>
<dbReference type="Proteomes" id="UP000002673">
    <property type="component" value="Chromosome"/>
</dbReference>
<dbReference type="GO" id="GO:0009279">
    <property type="term" value="C:cell outer membrane"/>
    <property type="evidence" value="ECO:0007669"/>
    <property type="project" value="UniProtKB-SubCell"/>
</dbReference>
<dbReference type="GO" id="GO:0046930">
    <property type="term" value="C:pore complex"/>
    <property type="evidence" value="ECO:0007669"/>
    <property type="project" value="UniProtKB-KW"/>
</dbReference>
<dbReference type="GO" id="GO:0005337">
    <property type="term" value="F:nucleoside transmembrane transporter activity"/>
    <property type="evidence" value="ECO:0007669"/>
    <property type="project" value="InterPro"/>
</dbReference>
<dbReference type="GO" id="GO:0015288">
    <property type="term" value="F:porin activity"/>
    <property type="evidence" value="ECO:0007669"/>
    <property type="project" value="UniProtKB-KW"/>
</dbReference>
<dbReference type="GO" id="GO:0006811">
    <property type="term" value="P:monoatomic ion transport"/>
    <property type="evidence" value="ECO:0007669"/>
    <property type="project" value="UniProtKB-KW"/>
</dbReference>
<dbReference type="FunFam" id="2.40.230.20:FF:000001">
    <property type="entry name" value="Nucleoside-specific channel-forming protein Tsx"/>
    <property type="match status" value="1"/>
</dbReference>
<dbReference type="Gene3D" id="2.40.230.20">
    <property type="entry name" value="Nucleoside-specific channel-forming protein, Tsx-like"/>
    <property type="match status" value="1"/>
</dbReference>
<dbReference type="InterPro" id="IPR003055">
    <property type="entry name" value="Channel_Tsx"/>
</dbReference>
<dbReference type="InterPro" id="IPR018013">
    <property type="entry name" value="Channel_Tsx-like"/>
</dbReference>
<dbReference type="InterPro" id="IPR036777">
    <property type="entry name" value="Channel_Tsx-like_sf"/>
</dbReference>
<dbReference type="NCBIfam" id="NF011686">
    <property type="entry name" value="PRK15106.1"/>
    <property type="match status" value="1"/>
</dbReference>
<dbReference type="Pfam" id="PF03502">
    <property type="entry name" value="Channel_Tsx"/>
    <property type="match status" value="1"/>
</dbReference>
<dbReference type="PRINTS" id="PR01277">
    <property type="entry name" value="CHANNELTSX"/>
</dbReference>
<dbReference type="SUPFAM" id="SSF111364">
    <property type="entry name" value="Tsx-like channel"/>
    <property type="match status" value="1"/>
</dbReference>
<comment type="function">
    <text evidence="1">Functions as a substrate-specific channel for nucleosides and deoxynucleosides.</text>
</comment>
<comment type="subcellular location">
    <subcellularLocation>
        <location evidence="1">Cell outer membrane</location>
        <topology evidence="1">Multi-pass membrane protein</topology>
    </subcellularLocation>
</comment>
<comment type="similarity">
    <text evidence="3">Belongs to the nucleoside-specific channel-forming outer membrane porin (Tsx) (TC 1.B.10) family.</text>
</comment>
<accession>P0A929</accession>
<accession>P22786</accession>
<feature type="signal peptide" evidence="2">
    <location>
        <begin position="1"/>
        <end position="22"/>
    </location>
</feature>
<feature type="chain" id="PRO_0000025196" description="Nucleoside-specific channel-forming protein Tsx">
    <location>
        <begin position="23"/>
        <end position="294"/>
    </location>
</feature>
<keyword id="KW-0998">Cell outer membrane</keyword>
<keyword id="KW-0406">Ion transport</keyword>
<keyword id="KW-0472">Membrane</keyword>
<keyword id="KW-0626">Porin</keyword>
<keyword id="KW-1185">Reference proteome</keyword>
<keyword id="KW-0732">Signal</keyword>
<keyword id="KW-0812">Transmembrane</keyword>
<keyword id="KW-1134">Transmembrane beta strand</keyword>
<keyword id="KW-0813">Transport</keyword>
<protein>
    <recommendedName>
        <fullName evidence="1">Nucleoside-specific channel-forming protein Tsx</fullName>
    </recommendedName>
</protein>
<sequence>MKKTLLAAGAVLALSSSFTVNAAENDKPQYLSDWWHQSVNVVGSYHTRFGPQIRNDTYLEYEAFAKKDWFDFYGYADAPVFFGGNSDAKGIWNHGSPLFMEIEPRFSIDKLTNTDLSFGPFKEWYFANNYIYDMGRNKDGRQSTWYMGLGTDIDTGLPMSLSMNVYAKYQWQNYGAANENEWDGYRFKIKYFVPITDLWGGQLSYIGFTNFDWGSDLGDDSGNAINGIKTRTNNSIASSHILALNYDHWHYSVVARYWHDGGQWNDDAELNFGNGNFNVRSTGWGGYLVVGYNF</sequence>
<reference key="1">
    <citation type="journal article" date="2002" name="Nucleic Acids Res.">
        <title>Genome sequence of Shigella flexneri 2a: insights into pathogenicity through comparison with genomes of Escherichia coli K12 and O157.</title>
        <authorList>
            <person name="Jin Q."/>
            <person name="Yuan Z."/>
            <person name="Xu J."/>
            <person name="Wang Y."/>
            <person name="Shen Y."/>
            <person name="Lu W."/>
            <person name="Wang J."/>
            <person name="Liu H."/>
            <person name="Yang J."/>
            <person name="Yang F."/>
            <person name="Zhang X."/>
            <person name="Zhang J."/>
            <person name="Yang G."/>
            <person name="Wu H."/>
            <person name="Qu D."/>
            <person name="Dong J."/>
            <person name="Sun L."/>
            <person name="Xue Y."/>
            <person name="Zhao A."/>
            <person name="Gao Y."/>
            <person name="Zhu J."/>
            <person name="Kan B."/>
            <person name="Ding K."/>
            <person name="Chen S."/>
            <person name="Cheng H."/>
            <person name="Yao Z."/>
            <person name="He B."/>
            <person name="Chen R."/>
            <person name="Ma D."/>
            <person name="Qiang B."/>
            <person name="Wen Y."/>
            <person name="Hou Y."/>
            <person name="Yu J."/>
        </authorList>
    </citation>
    <scope>NUCLEOTIDE SEQUENCE [LARGE SCALE GENOMIC DNA]</scope>
    <source>
        <strain>301 / Serotype 2a</strain>
    </source>
</reference>
<reference key="2">
    <citation type="journal article" date="2003" name="Infect. Immun.">
        <title>Complete genome sequence and comparative genomics of Shigella flexneri serotype 2a strain 2457T.</title>
        <authorList>
            <person name="Wei J."/>
            <person name="Goldberg M.B."/>
            <person name="Burland V."/>
            <person name="Venkatesan M.M."/>
            <person name="Deng W."/>
            <person name="Fournier G."/>
            <person name="Mayhew G.F."/>
            <person name="Plunkett G. III"/>
            <person name="Rose D.J."/>
            <person name="Darling A."/>
            <person name="Mau B."/>
            <person name="Perna N.T."/>
            <person name="Payne S.M."/>
            <person name="Runyen-Janecky L.J."/>
            <person name="Zhou S."/>
            <person name="Schwartz D.C."/>
            <person name="Blattner F.R."/>
        </authorList>
    </citation>
    <scope>NUCLEOTIDE SEQUENCE [LARGE SCALE GENOMIC DNA]</scope>
    <source>
        <strain>ATCC 700930 / 2457T / Serotype 2a</strain>
    </source>
</reference>
<name>TSX_SHIFL</name>
<evidence type="ECO:0000250" key="1">
    <source>
        <dbReference type="UniProtKB" id="P0A927"/>
    </source>
</evidence>
<evidence type="ECO:0000255" key="2"/>
<evidence type="ECO:0000305" key="3"/>
<gene>
    <name type="primary">tsx</name>
    <name type="ordered locus">SF0348</name>
    <name type="ordered locus">S0356</name>
</gene>
<organism>
    <name type="scientific">Shigella flexneri</name>
    <dbReference type="NCBI Taxonomy" id="623"/>
    <lineage>
        <taxon>Bacteria</taxon>
        <taxon>Pseudomonadati</taxon>
        <taxon>Pseudomonadota</taxon>
        <taxon>Gammaproteobacteria</taxon>
        <taxon>Enterobacterales</taxon>
        <taxon>Enterobacteriaceae</taxon>
        <taxon>Shigella</taxon>
    </lineage>
</organism>